<keyword id="KW-0227">DNA damage</keyword>
<keyword id="KW-0233">DNA recombination</keyword>
<keyword id="KW-0234">DNA repair</keyword>
<keyword id="KW-0479">Metal-binding</keyword>
<keyword id="KW-0862">Zinc</keyword>
<keyword id="KW-0863">Zinc-finger</keyword>
<dbReference type="EMBL" id="CP001099">
    <property type="protein sequence ID" value="ACF11251.1"/>
    <property type="molecule type" value="Genomic_DNA"/>
</dbReference>
<dbReference type="RefSeq" id="WP_012502084.1">
    <property type="nucleotide sequence ID" value="NC_011027.1"/>
</dbReference>
<dbReference type="SMR" id="B3QMU8"/>
<dbReference type="STRING" id="517417.Cpar_0835"/>
<dbReference type="KEGG" id="cpc:Cpar_0835"/>
<dbReference type="eggNOG" id="COG0353">
    <property type="taxonomic scope" value="Bacteria"/>
</dbReference>
<dbReference type="HOGENOM" id="CLU_060739_1_0_10"/>
<dbReference type="OrthoDB" id="9802672at2"/>
<dbReference type="Proteomes" id="UP000008811">
    <property type="component" value="Chromosome"/>
</dbReference>
<dbReference type="GO" id="GO:0003677">
    <property type="term" value="F:DNA binding"/>
    <property type="evidence" value="ECO:0007669"/>
    <property type="project" value="UniProtKB-UniRule"/>
</dbReference>
<dbReference type="GO" id="GO:0008270">
    <property type="term" value="F:zinc ion binding"/>
    <property type="evidence" value="ECO:0007669"/>
    <property type="project" value="UniProtKB-KW"/>
</dbReference>
<dbReference type="GO" id="GO:0006310">
    <property type="term" value="P:DNA recombination"/>
    <property type="evidence" value="ECO:0007669"/>
    <property type="project" value="UniProtKB-UniRule"/>
</dbReference>
<dbReference type="GO" id="GO:0006281">
    <property type="term" value="P:DNA repair"/>
    <property type="evidence" value="ECO:0007669"/>
    <property type="project" value="UniProtKB-UniRule"/>
</dbReference>
<dbReference type="CDD" id="cd01025">
    <property type="entry name" value="TOPRIM_recR"/>
    <property type="match status" value="1"/>
</dbReference>
<dbReference type="Gene3D" id="3.40.1360.10">
    <property type="match status" value="1"/>
</dbReference>
<dbReference type="Gene3D" id="6.10.250.240">
    <property type="match status" value="1"/>
</dbReference>
<dbReference type="Gene3D" id="1.10.8.420">
    <property type="entry name" value="RecR Domain 1"/>
    <property type="match status" value="1"/>
</dbReference>
<dbReference type="HAMAP" id="MF_00017">
    <property type="entry name" value="RecR"/>
    <property type="match status" value="1"/>
</dbReference>
<dbReference type="InterPro" id="IPR000093">
    <property type="entry name" value="DNA_Rcmb_RecR"/>
</dbReference>
<dbReference type="InterPro" id="IPR023627">
    <property type="entry name" value="Rcmb_RecR"/>
</dbReference>
<dbReference type="InterPro" id="IPR006171">
    <property type="entry name" value="TOPRIM_dom"/>
</dbReference>
<dbReference type="InterPro" id="IPR034137">
    <property type="entry name" value="TOPRIM_RecR"/>
</dbReference>
<dbReference type="NCBIfam" id="TIGR00615">
    <property type="entry name" value="recR"/>
    <property type="match status" value="1"/>
</dbReference>
<dbReference type="PANTHER" id="PTHR30446">
    <property type="entry name" value="RECOMBINATION PROTEIN RECR"/>
    <property type="match status" value="1"/>
</dbReference>
<dbReference type="PANTHER" id="PTHR30446:SF0">
    <property type="entry name" value="RECOMBINATION PROTEIN RECR"/>
    <property type="match status" value="1"/>
</dbReference>
<dbReference type="Pfam" id="PF21175">
    <property type="entry name" value="RecR_C"/>
    <property type="match status" value="1"/>
</dbReference>
<dbReference type="Pfam" id="PF21176">
    <property type="entry name" value="RecR_HhH"/>
    <property type="match status" value="1"/>
</dbReference>
<dbReference type="Pfam" id="PF13662">
    <property type="entry name" value="Toprim_4"/>
    <property type="match status" value="1"/>
</dbReference>
<dbReference type="SMART" id="SM00493">
    <property type="entry name" value="TOPRIM"/>
    <property type="match status" value="1"/>
</dbReference>
<dbReference type="SUPFAM" id="SSF111304">
    <property type="entry name" value="Recombination protein RecR"/>
    <property type="match status" value="1"/>
</dbReference>
<dbReference type="PROSITE" id="PS50880">
    <property type="entry name" value="TOPRIM"/>
    <property type="match status" value="1"/>
</dbReference>
<proteinExistence type="inferred from homology"/>
<evidence type="ECO:0000255" key="1">
    <source>
        <dbReference type="HAMAP-Rule" id="MF_00017"/>
    </source>
</evidence>
<sequence length="204" mass="22079">MRYSSGAVEALIEEFAKLPGIGRKTAQRLTMHVLQERRGEVEKLAAALIDVKEKVVRCSICQNITDLGTDPCLLCTSTGRDRSVICVVESPTEVLAFEKTGHYKGLYHVLHGVISPLDGVGPDDIKVRELLARISPDSEGGVREVVLALNPTVEGETTSLYISKLLKPLGINVTRIARGIPVGAELEFIDEATLSRAMDGRSAV</sequence>
<accession>B3QMU8</accession>
<feature type="chain" id="PRO_1000089715" description="Recombination protein RecR">
    <location>
        <begin position="1"/>
        <end position="204"/>
    </location>
</feature>
<feature type="domain" description="Toprim" evidence="1">
    <location>
        <begin position="83"/>
        <end position="181"/>
    </location>
</feature>
<feature type="zinc finger region" description="C4-type" evidence="1">
    <location>
        <begin position="58"/>
        <end position="75"/>
    </location>
</feature>
<comment type="function">
    <text evidence="1">May play a role in DNA repair. It seems to be involved in an RecBC-independent recombinational process of DNA repair. It may act with RecF and RecO.</text>
</comment>
<comment type="similarity">
    <text evidence="1">Belongs to the RecR family.</text>
</comment>
<organism>
    <name type="scientific">Chlorobaculum parvum (strain DSM 263 / NCIMB 8327)</name>
    <name type="common">Chlorobium vibrioforme subsp. thiosulfatophilum</name>
    <dbReference type="NCBI Taxonomy" id="517417"/>
    <lineage>
        <taxon>Bacteria</taxon>
        <taxon>Pseudomonadati</taxon>
        <taxon>Chlorobiota</taxon>
        <taxon>Chlorobiia</taxon>
        <taxon>Chlorobiales</taxon>
        <taxon>Chlorobiaceae</taxon>
        <taxon>Chlorobaculum</taxon>
    </lineage>
</organism>
<gene>
    <name evidence="1" type="primary">recR</name>
    <name type="ordered locus">Cpar_0835</name>
</gene>
<reference key="1">
    <citation type="submission" date="2008-06" db="EMBL/GenBank/DDBJ databases">
        <title>Complete sequence of Chlorobaculum parvum NCIB 8327.</title>
        <authorList>
            <consortium name="US DOE Joint Genome Institute"/>
            <person name="Lucas S."/>
            <person name="Copeland A."/>
            <person name="Lapidus A."/>
            <person name="Glavina del Rio T."/>
            <person name="Dalin E."/>
            <person name="Tice H."/>
            <person name="Bruce D."/>
            <person name="Goodwin L."/>
            <person name="Pitluck S."/>
            <person name="Schmutz J."/>
            <person name="Larimer F."/>
            <person name="Land M."/>
            <person name="Hauser L."/>
            <person name="Kyrpides N."/>
            <person name="Mikhailova N."/>
            <person name="Zhao F."/>
            <person name="Li T."/>
            <person name="Liu Z."/>
            <person name="Overmann J."/>
            <person name="Bryant D.A."/>
            <person name="Richardson P."/>
        </authorList>
    </citation>
    <scope>NUCLEOTIDE SEQUENCE [LARGE SCALE GENOMIC DNA]</scope>
    <source>
        <strain>DSM 263 / NCIMB 8327</strain>
    </source>
</reference>
<name>RECR_CHLP8</name>
<protein>
    <recommendedName>
        <fullName evidence="1">Recombination protein RecR</fullName>
    </recommendedName>
</protein>